<comment type="similarity">
    <text evidence="1">Belongs to the ROK (NagC/XylR) family.</text>
</comment>
<keyword id="KW-1185">Reference proteome</keyword>
<evidence type="ECO:0000305" key="1"/>
<proteinExistence type="inferred from homology"/>
<feature type="chain" id="PRO_0000095722" description="Uncharacterized protein CPE0188">
    <location>
        <begin position="1"/>
        <end position="295"/>
    </location>
</feature>
<feature type="sequence conflict" description="In Ref. 2." evidence="1" ref="2">
    <original>ALGEFFGGA</original>
    <variation>NSRIIWGML</variation>
    <location>
        <begin position="114"/>
        <end position="122"/>
    </location>
</feature>
<feature type="sequence conflict" description="In Ref. 2; AAA23256." evidence="1" ref="2">
    <original>H</original>
    <variation>N</variation>
    <location>
        <position position="168"/>
    </location>
</feature>
<gene>
    <name type="ordered locus">CPE0188</name>
</gene>
<accession>P26832</accession>
<protein>
    <recommendedName>
        <fullName>Uncharacterized protein CPE0188</fullName>
    </recommendedName>
</protein>
<organism>
    <name type="scientific">Clostridium perfringens (strain 13 / Type A)</name>
    <dbReference type="NCBI Taxonomy" id="195102"/>
    <lineage>
        <taxon>Bacteria</taxon>
        <taxon>Bacillati</taxon>
        <taxon>Bacillota</taxon>
        <taxon>Clostridia</taxon>
        <taxon>Eubacteriales</taxon>
        <taxon>Clostridiaceae</taxon>
        <taxon>Clostridium</taxon>
    </lineage>
</organism>
<reference key="1">
    <citation type="journal article" date="2002" name="Proc. Natl. Acad. Sci. U.S.A.">
        <title>Complete genome sequence of Clostridium perfringens, an anaerobic flesh-eater.</title>
        <authorList>
            <person name="Shimizu T."/>
            <person name="Ohtani K."/>
            <person name="Hirakawa H."/>
            <person name="Ohshima K."/>
            <person name="Yamashita A."/>
            <person name="Shiba T."/>
            <person name="Ogasawara N."/>
            <person name="Hattori M."/>
            <person name="Kuhara S."/>
            <person name="Hayashi H."/>
        </authorList>
    </citation>
    <scope>NUCLEOTIDE SEQUENCE [LARGE SCALE GENOMIC DNA]</scope>
    <source>
        <strain>13 / Type A</strain>
    </source>
</reference>
<reference key="2">
    <citation type="journal article" date="1994" name="Mol. Gen. Genet.">
        <title>Molecular genetic analysis of the nagH gene encoding a hyaluronidase of Clostridium perfringens.</title>
        <authorList>
            <person name="Canard B."/>
            <person name="Garnier T."/>
            <person name="Saint-Joanis B."/>
            <person name="Cole S.T."/>
        </authorList>
    </citation>
    <scope>NUCLEOTIDE SEQUENCE [GENOMIC DNA] OF 114-295</scope>
    <source>
        <strain>CPN50</strain>
    </source>
</reference>
<sequence length="295" mass="31759">MGLFAVIDIGGTSIKYGVINEDGTLLETNDRDTEAYKGGLSIIEKVKDIIHELKINNDISGICVSTAGMVCPKEGKIVYAGPTIPNYTGVEVKKILEEEFNLPCFVENDVNCAALGEFFGGAGKGTHSMACLTIGTGIGGALIIDGKVLHGFSNSAGEIGYMMVNGEHIQDIASASALVKNVALRKGVEPSSIDGRYVLDNYENGDLICKEEVEKLADNLALGISNIVYLINPEVVVLGGGIMAREEVFRPLIENSLRKYLIESVYNNTKIAFAKLKNTAGMKGAYYNFKENFNK</sequence>
<name>Y188_CLOPE</name>
<dbReference type="EMBL" id="BA000016">
    <property type="protein sequence ID" value="BAB79894.1"/>
    <property type="molecule type" value="Genomic_DNA"/>
</dbReference>
<dbReference type="EMBL" id="M81878">
    <property type="protein sequence ID" value="AAA23256.1"/>
    <property type="molecule type" value="Genomic_DNA"/>
</dbReference>
<dbReference type="PIR" id="S43901">
    <property type="entry name" value="S43901"/>
</dbReference>
<dbReference type="RefSeq" id="WP_011009662.1">
    <property type="nucleotide sequence ID" value="NC_003366.1"/>
</dbReference>
<dbReference type="SMR" id="P26832"/>
<dbReference type="STRING" id="195102.gene:10489432"/>
<dbReference type="KEGG" id="cpe:CPE0188"/>
<dbReference type="HOGENOM" id="CLU_036604_0_2_9"/>
<dbReference type="Proteomes" id="UP000000818">
    <property type="component" value="Chromosome"/>
</dbReference>
<dbReference type="CDD" id="cd24068">
    <property type="entry name" value="ASKHA_NBD_ROK_FnNanK-like"/>
    <property type="match status" value="1"/>
</dbReference>
<dbReference type="Gene3D" id="3.30.420.40">
    <property type="match status" value="2"/>
</dbReference>
<dbReference type="InterPro" id="IPR043129">
    <property type="entry name" value="ATPase_NBD"/>
</dbReference>
<dbReference type="InterPro" id="IPR000600">
    <property type="entry name" value="ROK"/>
</dbReference>
<dbReference type="PANTHER" id="PTHR18964:SF165">
    <property type="entry name" value="BETA-GLUCOSIDE KINASE"/>
    <property type="match status" value="1"/>
</dbReference>
<dbReference type="PANTHER" id="PTHR18964">
    <property type="entry name" value="ROK (REPRESSOR, ORF, KINASE) FAMILY"/>
    <property type="match status" value="1"/>
</dbReference>
<dbReference type="Pfam" id="PF00480">
    <property type="entry name" value="ROK"/>
    <property type="match status" value="1"/>
</dbReference>
<dbReference type="SUPFAM" id="SSF53067">
    <property type="entry name" value="Actin-like ATPase domain"/>
    <property type="match status" value="1"/>
</dbReference>